<evidence type="ECO:0000250" key="1"/>
<evidence type="ECO:0000250" key="2">
    <source>
        <dbReference type="UniProtKB" id="P0AFB5"/>
    </source>
</evidence>
<evidence type="ECO:0000255" key="3">
    <source>
        <dbReference type="PROSITE-ProRule" id="PRU00107"/>
    </source>
</evidence>
<dbReference type="EC" id="2.7.13.3" evidence="2"/>
<dbReference type="EC" id="3.1.3.-" evidence="2"/>
<dbReference type="EMBL" id="AL513382">
    <property type="protein sequence ID" value="CAD03094.1"/>
    <property type="molecule type" value="Genomic_DNA"/>
</dbReference>
<dbReference type="EMBL" id="AE014613">
    <property type="protein sequence ID" value="AAO71116.1"/>
    <property type="molecule type" value="Genomic_DNA"/>
</dbReference>
<dbReference type="RefSeq" id="NP_458043.1">
    <property type="nucleotide sequence ID" value="NC_003198.1"/>
</dbReference>
<dbReference type="RefSeq" id="WP_000146194.1">
    <property type="nucleotide sequence ID" value="NZ_WSUR01000010.1"/>
</dbReference>
<dbReference type="SMR" id="P0A2E0"/>
<dbReference type="STRING" id="220341.gene:17587731"/>
<dbReference type="KEGG" id="stt:t3615"/>
<dbReference type="KEGG" id="sty:STY3875"/>
<dbReference type="PATRIC" id="fig|220341.7.peg.3953"/>
<dbReference type="eggNOG" id="COG3852">
    <property type="taxonomic scope" value="Bacteria"/>
</dbReference>
<dbReference type="HOGENOM" id="CLU_000445_114_39_6"/>
<dbReference type="OMA" id="HGGRIDC"/>
<dbReference type="OrthoDB" id="9789238at2"/>
<dbReference type="Proteomes" id="UP000000541">
    <property type="component" value="Chromosome"/>
</dbReference>
<dbReference type="Proteomes" id="UP000002670">
    <property type="component" value="Chromosome"/>
</dbReference>
<dbReference type="GO" id="GO:0005737">
    <property type="term" value="C:cytoplasm"/>
    <property type="evidence" value="ECO:0007669"/>
    <property type="project" value="UniProtKB-SubCell"/>
</dbReference>
<dbReference type="GO" id="GO:0005524">
    <property type="term" value="F:ATP binding"/>
    <property type="evidence" value="ECO:0007669"/>
    <property type="project" value="UniProtKB-KW"/>
</dbReference>
<dbReference type="GO" id="GO:0016787">
    <property type="term" value="F:hydrolase activity"/>
    <property type="evidence" value="ECO:0007669"/>
    <property type="project" value="UniProtKB-KW"/>
</dbReference>
<dbReference type="GO" id="GO:0000155">
    <property type="term" value="F:phosphorelay sensor kinase activity"/>
    <property type="evidence" value="ECO:0007669"/>
    <property type="project" value="InterPro"/>
</dbReference>
<dbReference type="GO" id="GO:0009399">
    <property type="term" value="P:nitrogen fixation"/>
    <property type="evidence" value="ECO:0007669"/>
    <property type="project" value="UniProtKB-KW"/>
</dbReference>
<dbReference type="GO" id="GO:0006355">
    <property type="term" value="P:regulation of DNA-templated transcription"/>
    <property type="evidence" value="ECO:0007669"/>
    <property type="project" value="InterPro"/>
</dbReference>
<dbReference type="CDD" id="cd16918">
    <property type="entry name" value="HATPase_Glnl-NtrB-like"/>
    <property type="match status" value="1"/>
</dbReference>
<dbReference type="CDD" id="cd00082">
    <property type="entry name" value="HisKA"/>
    <property type="match status" value="1"/>
</dbReference>
<dbReference type="CDD" id="cd00130">
    <property type="entry name" value="PAS"/>
    <property type="match status" value="1"/>
</dbReference>
<dbReference type="FunFam" id="1.10.287.130:FF:000005">
    <property type="entry name" value="Nitrogen regulation histidine kinase"/>
    <property type="match status" value="1"/>
</dbReference>
<dbReference type="FunFam" id="3.30.565.10:FF:000008">
    <property type="entry name" value="Nitrogen regulation histidine kinase"/>
    <property type="match status" value="1"/>
</dbReference>
<dbReference type="Gene3D" id="1.10.287.130">
    <property type="match status" value="1"/>
</dbReference>
<dbReference type="Gene3D" id="3.30.565.10">
    <property type="entry name" value="Histidine kinase-like ATPase, C-terminal domain"/>
    <property type="match status" value="1"/>
</dbReference>
<dbReference type="Gene3D" id="3.30.450.20">
    <property type="entry name" value="PAS domain"/>
    <property type="match status" value="1"/>
</dbReference>
<dbReference type="InterPro" id="IPR036890">
    <property type="entry name" value="HATPase_C_sf"/>
</dbReference>
<dbReference type="InterPro" id="IPR005467">
    <property type="entry name" value="His_kinase_dom"/>
</dbReference>
<dbReference type="InterPro" id="IPR003661">
    <property type="entry name" value="HisK_dim/P_dom"/>
</dbReference>
<dbReference type="InterPro" id="IPR036097">
    <property type="entry name" value="HisK_dim/P_sf"/>
</dbReference>
<dbReference type="InterPro" id="IPR000014">
    <property type="entry name" value="PAS"/>
</dbReference>
<dbReference type="InterPro" id="IPR035965">
    <property type="entry name" value="PAS-like_dom_sf"/>
</dbReference>
<dbReference type="InterPro" id="IPR013767">
    <property type="entry name" value="PAS_fold"/>
</dbReference>
<dbReference type="InterPro" id="IPR004358">
    <property type="entry name" value="Sig_transdc_His_kin-like_C"/>
</dbReference>
<dbReference type="NCBIfam" id="NF008293">
    <property type="entry name" value="PRK11073.1"/>
    <property type="match status" value="1"/>
</dbReference>
<dbReference type="PANTHER" id="PTHR43065">
    <property type="entry name" value="SENSOR HISTIDINE KINASE"/>
    <property type="match status" value="1"/>
</dbReference>
<dbReference type="PANTHER" id="PTHR43065:SF16">
    <property type="entry name" value="SENSORY HISTIDINE KINASE_PHOSPHATASE NTRB"/>
    <property type="match status" value="1"/>
</dbReference>
<dbReference type="Pfam" id="PF02518">
    <property type="entry name" value="HATPase_c"/>
    <property type="match status" value="1"/>
</dbReference>
<dbReference type="Pfam" id="PF00512">
    <property type="entry name" value="HisKA"/>
    <property type="match status" value="1"/>
</dbReference>
<dbReference type="Pfam" id="PF00989">
    <property type="entry name" value="PAS"/>
    <property type="match status" value="1"/>
</dbReference>
<dbReference type="PRINTS" id="PR00344">
    <property type="entry name" value="BCTRLSENSOR"/>
</dbReference>
<dbReference type="SMART" id="SM00387">
    <property type="entry name" value="HATPase_c"/>
    <property type="match status" value="1"/>
</dbReference>
<dbReference type="SMART" id="SM00388">
    <property type="entry name" value="HisKA"/>
    <property type="match status" value="1"/>
</dbReference>
<dbReference type="SMART" id="SM00091">
    <property type="entry name" value="PAS"/>
    <property type="match status" value="1"/>
</dbReference>
<dbReference type="SUPFAM" id="SSF55874">
    <property type="entry name" value="ATPase domain of HSP90 chaperone/DNA topoisomerase II/histidine kinase"/>
    <property type="match status" value="1"/>
</dbReference>
<dbReference type="SUPFAM" id="SSF47384">
    <property type="entry name" value="Homodimeric domain of signal transducing histidine kinase"/>
    <property type="match status" value="1"/>
</dbReference>
<dbReference type="SUPFAM" id="SSF55785">
    <property type="entry name" value="PYP-like sensor domain (PAS domain)"/>
    <property type="match status" value="1"/>
</dbReference>
<dbReference type="PROSITE" id="PS50109">
    <property type="entry name" value="HIS_KIN"/>
    <property type="match status" value="1"/>
</dbReference>
<feature type="chain" id="PRO_0000074822" description="Sensory histidine kinase/phosphatase NtrB">
    <location>
        <begin position="1"/>
        <end position="349"/>
    </location>
</feature>
<feature type="domain" description="PAS">
    <location>
        <begin position="5"/>
        <end position="78"/>
    </location>
</feature>
<feature type="domain" description="Histidine kinase" evidence="3">
    <location>
        <begin position="136"/>
        <end position="349"/>
    </location>
</feature>
<feature type="binding site" evidence="1">
    <location>
        <position position="329"/>
    </location>
    <ligand>
        <name>ATP</name>
        <dbReference type="ChEBI" id="CHEBI:30616"/>
    </ligand>
</feature>
<feature type="modified residue" description="Phosphohistidine; by autocatalysis" evidence="3">
    <location>
        <position position="139"/>
    </location>
</feature>
<accession>P0A2E0</accession>
<accession>P41788</accession>
<sequence length="349" mass="38542">MASGIQPDAGQILNSLINSVLVVDDALAIHYANPAAQQLLAQSSRKLFGTPLPELLSYFSLNIDLMRESLAAGQGFTDNEVTLVIDSRSHILSLTAQRLPDDFILLEMAPMDNQRRLSQEQLQHAQQIAARDLVRGLAHEIKNPLGGLRGAAQLLSKALPDPALTEYTKVIIEQADRLRNLVDRLLGPQHPGMHITESIHKVAERVVALVSMELPDNVRLIRDYDPSLPELPHDPEQIEQVLLNIVRNALQALGPEGGEITLRTRTAFQLTLHGERYRLAARIDVEDNGPGIPPHLQDTLFYPMVSGREGGTGLGLSIARNLIDQHAGKIEFTSWPGHTEFSVYLPIRK</sequence>
<name>NTRB_SALTI</name>
<organism>
    <name type="scientific">Salmonella typhi</name>
    <dbReference type="NCBI Taxonomy" id="90370"/>
    <lineage>
        <taxon>Bacteria</taxon>
        <taxon>Pseudomonadati</taxon>
        <taxon>Pseudomonadota</taxon>
        <taxon>Gammaproteobacteria</taxon>
        <taxon>Enterobacterales</taxon>
        <taxon>Enterobacteriaceae</taxon>
        <taxon>Salmonella</taxon>
    </lineage>
</organism>
<reference key="1">
    <citation type="journal article" date="2001" name="Nature">
        <title>Complete genome sequence of a multiple drug resistant Salmonella enterica serovar Typhi CT18.</title>
        <authorList>
            <person name="Parkhill J."/>
            <person name="Dougan G."/>
            <person name="James K.D."/>
            <person name="Thomson N.R."/>
            <person name="Pickard D."/>
            <person name="Wain J."/>
            <person name="Churcher C.M."/>
            <person name="Mungall K.L."/>
            <person name="Bentley S.D."/>
            <person name="Holden M.T.G."/>
            <person name="Sebaihia M."/>
            <person name="Baker S."/>
            <person name="Basham D."/>
            <person name="Brooks K."/>
            <person name="Chillingworth T."/>
            <person name="Connerton P."/>
            <person name="Cronin A."/>
            <person name="Davis P."/>
            <person name="Davies R.M."/>
            <person name="Dowd L."/>
            <person name="White N."/>
            <person name="Farrar J."/>
            <person name="Feltwell T."/>
            <person name="Hamlin N."/>
            <person name="Haque A."/>
            <person name="Hien T.T."/>
            <person name="Holroyd S."/>
            <person name="Jagels K."/>
            <person name="Krogh A."/>
            <person name="Larsen T.S."/>
            <person name="Leather S."/>
            <person name="Moule S."/>
            <person name="O'Gaora P."/>
            <person name="Parry C."/>
            <person name="Quail M.A."/>
            <person name="Rutherford K.M."/>
            <person name="Simmonds M."/>
            <person name="Skelton J."/>
            <person name="Stevens K."/>
            <person name="Whitehead S."/>
            <person name="Barrell B.G."/>
        </authorList>
    </citation>
    <scope>NUCLEOTIDE SEQUENCE [LARGE SCALE GENOMIC DNA]</scope>
    <source>
        <strain>CT18</strain>
    </source>
</reference>
<reference key="2">
    <citation type="journal article" date="2003" name="J. Bacteriol.">
        <title>Comparative genomics of Salmonella enterica serovar Typhi strains Ty2 and CT18.</title>
        <authorList>
            <person name="Deng W."/>
            <person name="Liou S.-R."/>
            <person name="Plunkett G. III"/>
            <person name="Mayhew G.F."/>
            <person name="Rose D.J."/>
            <person name="Burland V."/>
            <person name="Kodoyianni V."/>
            <person name="Schwartz D.C."/>
            <person name="Blattner F.R."/>
        </authorList>
    </citation>
    <scope>NUCLEOTIDE SEQUENCE [LARGE SCALE GENOMIC DNA]</scope>
    <source>
        <strain>ATCC 700931 / Ty2</strain>
    </source>
</reference>
<protein>
    <recommendedName>
        <fullName evidence="2">Sensory histidine kinase/phosphatase NtrB</fullName>
        <ecNumber evidence="2">2.7.13.3</ecNumber>
        <ecNumber evidence="2">3.1.3.-</ecNumber>
    </recommendedName>
    <alternativeName>
        <fullName evidence="2">Nitrogen regulation protein NR(II)</fullName>
    </alternativeName>
    <alternativeName>
        <fullName evidence="2">Nitrogen regulator II</fullName>
        <shortName evidence="2">NRII</shortName>
    </alternativeName>
</protein>
<keyword id="KW-0067">ATP-binding</keyword>
<keyword id="KW-0963">Cytoplasm</keyword>
<keyword id="KW-0378">Hydrolase</keyword>
<keyword id="KW-0418">Kinase</keyword>
<keyword id="KW-0535">Nitrogen fixation</keyword>
<keyword id="KW-0547">Nucleotide-binding</keyword>
<keyword id="KW-0597">Phosphoprotein</keyword>
<keyword id="KW-0808">Transferase</keyword>
<keyword id="KW-0902">Two-component regulatory system</keyword>
<gene>
    <name type="primary">glnL</name>
    <name type="synonym">ntrB</name>
    <name type="ordered locus">STY3875</name>
    <name type="ordered locus">t3615</name>
</gene>
<proteinExistence type="inferred from homology"/>
<comment type="function">
    <text evidence="2">Member of the two-component regulatory system NtrB/NtrC, which controls expression of the nitrogen-regulated (ntr) genes in response to nitrogen limitation. Under conditions of nitrogen limitation, NtrB autophosphorylates and transfers the phosphoryl group to NtrC. In the presence of nitrogen, acts as a phosphatase that dephosphorylates and inactivates NtrC.</text>
</comment>
<comment type="catalytic activity">
    <reaction evidence="2">
        <text>ATP + protein L-histidine = ADP + protein N-phospho-L-histidine.</text>
        <dbReference type="EC" id="2.7.13.3"/>
    </reaction>
</comment>
<comment type="subcellular location">
    <subcellularLocation>
        <location evidence="2">Cytoplasm</location>
    </subcellularLocation>
</comment>
<comment type="PTM">
    <text evidence="2">Autophosphorylated.</text>
</comment>